<keyword id="KW-0012">Acyltransferase</keyword>
<keyword id="KW-0256">Endoplasmic reticulum</keyword>
<keyword id="KW-0449">Lipoprotein</keyword>
<keyword id="KW-0472">Membrane</keyword>
<keyword id="KW-0564">Palmitate</keyword>
<keyword id="KW-1185">Reference proteome</keyword>
<keyword id="KW-0808">Transferase</keyword>
<keyword id="KW-0812">Transmembrane</keyword>
<keyword id="KW-1133">Transmembrane helix</keyword>
<evidence type="ECO:0000250" key="1"/>
<evidence type="ECO:0000255" key="2"/>
<evidence type="ECO:0000255" key="3">
    <source>
        <dbReference type="PROSITE-ProRule" id="PRU00067"/>
    </source>
</evidence>
<evidence type="ECO:0000305" key="4"/>
<dbReference type="EC" id="2.3.1.225"/>
<dbReference type="EMBL" id="CR380948">
    <property type="protein sequence ID" value="CAG57956.1"/>
    <property type="molecule type" value="Genomic_DNA"/>
</dbReference>
<dbReference type="RefSeq" id="XP_445056.1">
    <property type="nucleotide sequence ID" value="XM_445056.1"/>
</dbReference>
<dbReference type="SMR" id="Q6FXC6"/>
<dbReference type="FunCoup" id="Q6FXC6">
    <property type="interactions" value="41"/>
</dbReference>
<dbReference type="STRING" id="284593.Q6FXC6"/>
<dbReference type="EnsemblFungi" id="CAGL0B01991g-T">
    <property type="protein sequence ID" value="CAGL0B01991g-T-p1"/>
    <property type="gene ID" value="CAGL0B01991g"/>
</dbReference>
<dbReference type="KEGG" id="cgr:2886685"/>
<dbReference type="CGD" id="CAL0127124">
    <property type="gene designation" value="CAGL0B01991g"/>
</dbReference>
<dbReference type="VEuPathDB" id="FungiDB:CAGL0B01991g"/>
<dbReference type="eggNOG" id="KOG1312">
    <property type="taxonomic scope" value="Eukaryota"/>
</dbReference>
<dbReference type="HOGENOM" id="CLU_042181_2_0_1"/>
<dbReference type="InParanoid" id="Q6FXC6"/>
<dbReference type="OMA" id="STNAYDH"/>
<dbReference type="Proteomes" id="UP000002428">
    <property type="component" value="Chromosome B"/>
</dbReference>
<dbReference type="GO" id="GO:0030479">
    <property type="term" value="C:actin cortical patch"/>
    <property type="evidence" value="ECO:0007669"/>
    <property type="project" value="EnsemblFungi"/>
</dbReference>
<dbReference type="GO" id="GO:0032432">
    <property type="term" value="C:actin filament bundle"/>
    <property type="evidence" value="ECO:0007669"/>
    <property type="project" value="EnsemblFungi"/>
</dbReference>
<dbReference type="GO" id="GO:0005789">
    <property type="term" value="C:endoplasmic reticulum membrane"/>
    <property type="evidence" value="ECO:0007669"/>
    <property type="project" value="UniProtKB-SubCell"/>
</dbReference>
<dbReference type="GO" id="GO:0005794">
    <property type="term" value="C:Golgi apparatus"/>
    <property type="evidence" value="ECO:0007669"/>
    <property type="project" value="TreeGrafter"/>
</dbReference>
<dbReference type="GO" id="GO:0019706">
    <property type="term" value="F:protein-cysteine S-palmitoyltransferase activity"/>
    <property type="evidence" value="ECO:0007669"/>
    <property type="project" value="UniProtKB-EC"/>
</dbReference>
<dbReference type="GO" id="GO:0030866">
    <property type="term" value="P:cortical actin cytoskeleton organization"/>
    <property type="evidence" value="ECO:0007669"/>
    <property type="project" value="EnsemblFungi"/>
</dbReference>
<dbReference type="GO" id="GO:0030010">
    <property type="term" value="P:establishment of cell polarity"/>
    <property type="evidence" value="ECO:0007669"/>
    <property type="project" value="EnsemblFungi"/>
</dbReference>
<dbReference type="GO" id="GO:0006612">
    <property type="term" value="P:protein targeting to membrane"/>
    <property type="evidence" value="ECO:0007669"/>
    <property type="project" value="TreeGrafter"/>
</dbReference>
<dbReference type="GO" id="GO:0017157">
    <property type="term" value="P:regulation of exocytosis"/>
    <property type="evidence" value="ECO:0007669"/>
    <property type="project" value="EnsemblFungi"/>
</dbReference>
<dbReference type="GO" id="GO:0042144">
    <property type="term" value="P:vacuole fusion, non-autophagic"/>
    <property type="evidence" value="ECO:0007669"/>
    <property type="project" value="EnsemblFungi"/>
</dbReference>
<dbReference type="InterPro" id="IPR001594">
    <property type="entry name" value="Palmitoyltrfase_DHHC"/>
</dbReference>
<dbReference type="InterPro" id="IPR039859">
    <property type="entry name" value="PFA4/ZDH16/20/ERF2-like"/>
</dbReference>
<dbReference type="PANTHER" id="PTHR22883:SF489">
    <property type="entry name" value="PALMITOYLTRANSFERASE SWF1"/>
    <property type="match status" value="1"/>
</dbReference>
<dbReference type="PANTHER" id="PTHR22883">
    <property type="entry name" value="ZINC FINGER DHHC DOMAIN CONTAINING PROTEIN"/>
    <property type="match status" value="1"/>
</dbReference>
<dbReference type="Pfam" id="PF01529">
    <property type="entry name" value="DHHC"/>
    <property type="match status" value="1"/>
</dbReference>
<dbReference type="PROSITE" id="PS50216">
    <property type="entry name" value="DHHC"/>
    <property type="match status" value="1"/>
</dbReference>
<accession>Q6FXC6</accession>
<protein>
    <recommendedName>
        <fullName>Palmitoyltransferase SWF1</fullName>
        <ecNumber>2.3.1.225</ecNumber>
    </recommendedName>
</protein>
<gene>
    <name type="primary">SWF1</name>
    <name type="ordered locus">CAGL0B01991g</name>
</gene>
<name>SWF1_CANGA</name>
<feature type="chain" id="PRO_0000212987" description="Palmitoyltransferase SWF1">
    <location>
        <begin position="1"/>
        <end position="330"/>
    </location>
</feature>
<feature type="transmembrane region" description="Helical" evidence="2">
    <location>
        <begin position="1"/>
        <end position="21"/>
    </location>
</feature>
<feature type="topological domain" description="Cytoplasmic" evidence="2">
    <location>
        <begin position="22"/>
        <end position="50"/>
    </location>
</feature>
<feature type="transmembrane region" description="Helical" evidence="2">
    <location>
        <begin position="51"/>
        <end position="71"/>
    </location>
</feature>
<feature type="topological domain" description="Lumenal" evidence="2">
    <location>
        <begin position="72"/>
        <end position="86"/>
    </location>
</feature>
<feature type="transmembrane region" description="Helical" evidence="2">
    <location>
        <begin position="87"/>
        <end position="107"/>
    </location>
</feature>
<feature type="topological domain" description="Cytoplasmic" evidence="2">
    <location>
        <begin position="108"/>
        <end position="181"/>
    </location>
</feature>
<feature type="transmembrane region" description="Helical" evidence="2">
    <location>
        <begin position="182"/>
        <end position="202"/>
    </location>
</feature>
<feature type="topological domain" description="Lumenal" evidence="2">
    <location>
        <begin position="203"/>
        <end position="218"/>
    </location>
</feature>
<feature type="transmembrane region" description="Helical" evidence="2">
    <location>
        <begin position="219"/>
        <end position="239"/>
    </location>
</feature>
<feature type="topological domain" description="Cytoplasmic" evidence="2">
    <location>
        <begin position="240"/>
        <end position="330"/>
    </location>
</feature>
<feature type="domain" description="DHHC" evidence="3">
    <location>
        <begin position="134"/>
        <end position="184"/>
    </location>
</feature>
<organism>
    <name type="scientific">Candida glabrata (strain ATCC 2001 / BCRC 20586 / JCM 3761 / NBRC 0622 / NRRL Y-65 / CBS 138)</name>
    <name type="common">Yeast</name>
    <name type="synonym">Nakaseomyces glabratus</name>
    <dbReference type="NCBI Taxonomy" id="284593"/>
    <lineage>
        <taxon>Eukaryota</taxon>
        <taxon>Fungi</taxon>
        <taxon>Dikarya</taxon>
        <taxon>Ascomycota</taxon>
        <taxon>Saccharomycotina</taxon>
        <taxon>Saccharomycetes</taxon>
        <taxon>Saccharomycetales</taxon>
        <taxon>Saccharomycetaceae</taxon>
        <taxon>Nakaseomyces</taxon>
    </lineage>
</organism>
<sequence length="330" mass="38744">MLLFLVFILVVSQVVLLLLSPQFRDKFIFRWYYDEVYKPMILDNSRYRIKFYVVPVFYLSVYSYMVYIFYSRTFAIISPMLTSIETYVVIPLMLILPLFFGSMSMIIKPDSSNAHQIGSEKRYPYDNLLYFPQHECRTCKQVKPARSKHCTVCNSCIYLADHHCVWINNCVGMGNYMYFYSFLCSNLLLLSYSFIRLIFIQFNKSAYNTTPTGEKSLLILSILCGSFTVILAVYCYFVFELVNSGMTTNEKDKWQMVHDYINTGDLVRDPEGKYFIKYQNGGNNYEFYSTDSYDGTQYTIVDYFTVKSPAEITNIYDKGNFINNLREFIG</sequence>
<reference key="1">
    <citation type="journal article" date="2004" name="Nature">
        <title>Genome evolution in yeasts.</title>
        <authorList>
            <person name="Dujon B."/>
            <person name="Sherman D."/>
            <person name="Fischer G."/>
            <person name="Durrens P."/>
            <person name="Casaregola S."/>
            <person name="Lafontaine I."/>
            <person name="de Montigny J."/>
            <person name="Marck C."/>
            <person name="Neuveglise C."/>
            <person name="Talla E."/>
            <person name="Goffard N."/>
            <person name="Frangeul L."/>
            <person name="Aigle M."/>
            <person name="Anthouard V."/>
            <person name="Babour A."/>
            <person name="Barbe V."/>
            <person name="Barnay S."/>
            <person name="Blanchin S."/>
            <person name="Beckerich J.-M."/>
            <person name="Beyne E."/>
            <person name="Bleykasten C."/>
            <person name="Boisrame A."/>
            <person name="Boyer J."/>
            <person name="Cattolico L."/>
            <person name="Confanioleri F."/>
            <person name="de Daruvar A."/>
            <person name="Despons L."/>
            <person name="Fabre E."/>
            <person name="Fairhead C."/>
            <person name="Ferry-Dumazet H."/>
            <person name="Groppi A."/>
            <person name="Hantraye F."/>
            <person name="Hennequin C."/>
            <person name="Jauniaux N."/>
            <person name="Joyet P."/>
            <person name="Kachouri R."/>
            <person name="Kerrest A."/>
            <person name="Koszul R."/>
            <person name="Lemaire M."/>
            <person name="Lesur I."/>
            <person name="Ma L."/>
            <person name="Muller H."/>
            <person name="Nicaud J.-M."/>
            <person name="Nikolski M."/>
            <person name="Oztas S."/>
            <person name="Ozier-Kalogeropoulos O."/>
            <person name="Pellenz S."/>
            <person name="Potier S."/>
            <person name="Richard G.-F."/>
            <person name="Straub M.-L."/>
            <person name="Suleau A."/>
            <person name="Swennen D."/>
            <person name="Tekaia F."/>
            <person name="Wesolowski-Louvel M."/>
            <person name="Westhof E."/>
            <person name="Wirth B."/>
            <person name="Zeniou-Meyer M."/>
            <person name="Zivanovic Y."/>
            <person name="Bolotin-Fukuhara M."/>
            <person name="Thierry A."/>
            <person name="Bouchier C."/>
            <person name="Caudron B."/>
            <person name="Scarpelli C."/>
            <person name="Gaillardin C."/>
            <person name="Weissenbach J."/>
            <person name="Wincker P."/>
            <person name="Souciet J.-L."/>
        </authorList>
    </citation>
    <scope>NUCLEOTIDE SEQUENCE [LARGE SCALE GENOMIC DNA]</scope>
    <source>
        <strain>ATCC 2001 / BCRC 20586 / JCM 3761 / NBRC 0622 / NRRL Y-65 / CBS 138</strain>
    </source>
</reference>
<comment type="function">
    <text evidence="1">Palmitoyltransferase that targets several endosomal SNAREs. Palmitoylates the SNAREs at cysteine residues close to the cytoplasmic end of their transmembrane domain. May have a role in the cellular quality control of transmembrane domain-containing proteins (By similarity).</text>
</comment>
<comment type="catalytic activity">
    <reaction>
        <text>L-cysteinyl-[protein] + hexadecanoyl-CoA = S-hexadecanoyl-L-cysteinyl-[protein] + CoA</text>
        <dbReference type="Rhea" id="RHEA:36683"/>
        <dbReference type="Rhea" id="RHEA-COMP:10131"/>
        <dbReference type="Rhea" id="RHEA-COMP:11032"/>
        <dbReference type="ChEBI" id="CHEBI:29950"/>
        <dbReference type="ChEBI" id="CHEBI:57287"/>
        <dbReference type="ChEBI" id="CHEBI:57379"/>
        <dbReference type="ChEBI" id="CHEBI:74151"/>
        <dbReference type="EC" id="2.3.1.225"/>
    </reaction>
</comment>
<comment type="subcellular location">
    <subcellularLocation>
        <location evidence="1">Endoplasmic reticulum membrane</location>
        <topology evidence="1">Multi-pass membrane protein</topology>
    </subcellularLocation>
</comment>
<comment type="domain">
    <text evidence="1">The DHHC domain is required for palmitoyltransferase activity.</text>
</comment>
<comment type="similarity">
    <text evidence="4">Belongs to the DHHC palmitoyltransferase family. SWF1 subfamily.</text>
</comment>
<proteinExistence type="inferred from homology"/>